<sequence length="216" mass="24300">MRTGILGGTFNPIHHAHLRIAEEVRDAFALDQVIFIPAASPPHKPMEGEIPFEVRCEMVRLATADNPSFAVSDLEGRRTGKSYSIDTLRELRRERPGDEFFFIIGSDSFLDFGSWHEYEAIFSSCNIVAVERPGAVIRDLAAAIPVAVAPQFCYHAAEKRLAHRSGYSVYYLAGIPLDISSSAIRRLARLGRSIRYLVPEPVAHYITEQRIYTHDR</sequence>
<organism>
    <name type="scientific">Geobacter metallireducens (strain ATCC 53774 / DSM 7210 / GS-15)</name>
    <dbReference type="NCBI Taxonomy" id="269799"/>
    <lineage>
        <taxon>Bacteria</taxon>
        <taxon>Pseudomonadati</taxon>
        <taxon>Thermodesulfobacteriota</taxon>
        <taxon>Desulfuromonadia</taxon>
        <taxon>Geobacterales</taxon>
        <taxon>Geobacteraceae</taxon>
        <taxon>Geobacter</taxon>
    </lineage>
</organism>
<protein>
    <recommendedName>
        <fullName evidence="1">Probable nicotinate-nucleotide adenylyltransferase</fullName>
        <ecNumber evidence="1">2.7.7.18</ecNumber>
    </recommendedName>
    <alternativeName>
        <fullName evidence="1">Deamido-NAD(+) diphosphorylase</fullName>
    </alternativeName>
    <alternativeName>
        <fullName evidence="1">Deamido-NAD(+) pyrophosphorylase</fullName>
    </alternativeName>
    <alternativeName>
        <fullName evidence="1">Nicotinate mononucleotide adenylyltransferase</fullName>
        <shortName evidence="1">NaMN adenylyltransferase</shortName>
    </alternativeName>
</protein>
<dbReference type="EC" id="2.7.7.18" evidence="1"/>
<dbReference type="EMBL" id="CP000148">
    <property type="protein sequence ID" value="ABB33413.1"/>
    <property type="molecule type" value="Genomic_DNA"/>
</dbReference>
<dbReference type="RefSeq" id="WP_004512638.1">
    <property type="nucleotide sequence ID" value="NC_007517.1"/>
</dbReference>
<dbReference type="SMR" id="Q39QR1"/>
<dbReference type="STRING" id="269799.Gmet_3200"/>
<dbReference type="KEGG" id="gme:Gmet_3200"/>
<dbReference type="eggNOG" id="COG1057">
    <property type="taxonomic scope" value="Bacteria"/>
</dbReference>
<dbReference type="HOGENOM" id="CLU_069765_0_1_7"/>
<dbReference type="UniPathway" id="UPA00253">
    <property type="reaction ID" value="UER00332"/>
</dbReference>
<dbReference type="Proteomes" id="UP000007073">
    <property type="component" value="Chromosome"/>
</dbReference>
<dbReference type="GO" id="GO:0005524">
    <property type="term" value="F:ATP binding"/>
    <property type="evidence" value="ECO:0007669"/>
    <property type="project" value="UniProtKB-KW"/>
</dbReference>
<dbReference type="GO" id="GO:0004515">
    <property type="term" value="F:nicotinate-nucleotide adenylyltransferase activity"/>
    <property type="evidence" value="ECO:0007669"/>
    <property type="project" value="UniProtKB-UniRule"/>
</dbReference>
<dbReference type="GO" id="GO:0009435">
    <property type="term" value="P:NAD biosynthetic process"/>
    <property type="evidence" value="ECO:0007669"/>
    <property type="project" value="UniProtKB-UniRule"/>
</dbReference>
<dbReference type="CDD" id="cd02165">
    <property type="entry name" value="NMNAT"/>
    <property type="match status" value="1"/>
</dbReference>
<dbReference type="Gene3D" id="3.40.50.620">
    <property type="entry name" value="HUPs"/>
    <property type="match status" value="1"/>
</dbReference>
<dbReference type="HAMAP" id="MF_00244">
    <property type="entry name" value="NaMN_adenylyltr"/>
    <property type="match status" value="1"/>
</dbReference>
<dbReference type="InterPro" id="IPR004821">
    <property type="entry name" value="Cyt_trans-like"/>
</dbReference>
<dbReference type="InterPro" id="IPR005248">
    <property type="entry name" value="NadD/NMNAT"/>
</dbReference>
<dbReference type="InterPro" id="IPR014729">
    <property type="entry name" value="Rossmann-like_a/b/a_fold"/>
</dbReference>
<dbReference type="NCBIfam" id="TIGR00125">
    <property type="entry name" value="cyt_tran_rel"/>
    <property type="match status" value="1"/>
</dbReference>
<dbReference type="NCBIfam" id="TIGR00482">
    <property type="entry name" value="nicotinate (nicotinamide) nucleotide adenylyltransferase"/>
    <property type="match status" value="1"/>
</dbReference>
<dbReference type="NCBIfam" id="NF000840">
    <property type="entry name" value="PRK00071.1-3"/>
    <property type="match status" value="1"/>
</dbReference>
<dbReference type="PANTHER" id="PTHR39321">
    <property type="entry name" value="NICOTINATE-NUCLEOTIDE ADENYLYLTRANSFERASE-RELATED"/>
    <property type="match status" value="1"/>
</dbReference>
<dbReference type="PANTHER" id="PTHR39321:SF3">
    <property type="entry name" value="PHOSPHOPANTETHEINE ADENYLYLTRANSFERASE"/>
    <property type="match status" value="1"/>
</dbReference>
<dbReference type="Pfam" id="PF01467">
    <property type="entry name" value="CTP_transf_like"/>
    <property type="match status" value="1"/>
</dbReference>
<dbReference type="SUPFAM" id="SSF52374">
    <property type="entry name" value="Nucleotidylyl transferase"/>
    <property type="match status" value="1"/>
</dbReference>
<proteinExistence type="inferred from homology"/>
<comment type="function">
    <text evidence="1">Catalyzes the reversible adenylation of nicotinate mononucleotide (NaMN) to nicotinic acid adenine dinucleotide (NaAD).</text>
</comment>
<comment type="catalytic activity">
    <reaction evidence="1">
        <text>nicotinate beta-D-ribonucleotide + ATP + H(+) = deamido-NAD(+) + diphosphate</text>
        <dbReference type="Rhea" id="RHEA:22860"/>
        <dbReference type="ChEBI" id="CHEBI:15378"/>
        <dbReference type="ChEBI" id="CHEBI:30616"/>
        <dbReference type="ChEBI" id="CHEBI:33019"/>
        <dbReference type="ChEBI" id="CHEBI:57502"/>
        <dbReference type="ChEBI" id="CHEBI:58437"/>
        <dbReference type="EC" id="2.7.7.18"/>
    </reaction>
</comment>
<comment type="pathway">
    <text evidence="1">Cofactor biosynthesis; NAD(+) biosynthesis; deamido-NAD(+) from nicotinate D-ribonucleotide: step 1/1.</text>
</comment>
<comment type="similarity">
    <text evidence="1">Belongs to the NadD family.</text>
</comment>
<feature type="chain" id="PRO_1000078382" description="Probable nicotinate-nucleotide adenylyltransferase">
    <location>
        <begin position="1"/>
        <end position="216"/>
    </location>
</feature>
<keyword id="KW-0067">ATP-binding</keyword>
<keyword id="KW-0520">NAD</keyword>
<keyword id="KW-0547">Nucleotide-binding</keyword>
<keyword id="KW-0548">Nucleotidyltransferase</keyword>
<keyword id="KW-0662">Pyridine nucleotide biosynthesis</keyword>
<keyword id="KW-1185">Reference proteome</keyword>
<keyword id="KW-0808">Transferase</keyword>
<evidence type="ECO:0000255" key="1">
    <source>
        <dbReference type="HAMAP-Rule" id="MF_00244"/>
    </source>
</evidence>
<accession>Q39QR1</accession>
<gene>
    <name evidence="1" type="primary">nadD</name>
    <name type="ordered locus">Gmet_3200</name>
</gene>
<reference key="1">
    <citation type="journal article" date="2009" name="BMC Microbiol.">
        <title>The genome sequence of Geobacter metallireducens: features of metabolism, physiology and regulation common and dissimilar to Geobacter sulfurreducens.</title>
        <authorList>
            <person name="Aklujkar M."/>
            <person name="Krushkal J."/>
            <person name="DiBartolo G."/>
            <person name="Lapidus A."/>
            <person name="Land M.L."/>
            <person name="Lovley D.R."/>
        </authorList>
    </citation>
    <scope>NUCLEOTIDE SEQUENCE [LARGE SCALE GENOMIC DNA]</scope>
    <source>
        <strain>ATCC 53774 / DSM 7210 / GS-15</strain>
    </source>
</reference>
<name>NADD_GEOMG</name>